<dbReference type="EC" id="2.6.1.81" evidence="1"/>
<dbReference type="EMBL" id="CP000036">
    <property type="protein sequence ID" value="ABB65968.1"/>
    <property type="molecule type" value="Genomic_DNA"/>
</dbReference>
<dbReference type="RefSeq" id="WP_000081975.1">
    <property type="nucleotide sequence ID" value="NC_007613.1"/>
</dbReference>
<dbReference type="SMR" id="Q321P0"/>
<dbReference type="KEGG" id="sbo:SBO_1342"/>
<dbReference type="HOGENOM" id="CLU_016922_10_1_6"/>
<dbReference type="UniPathway" id="UPA00185">
    <property type="reaction ID" value="UER00281"/>
</dbReference>
<dbReference type="Proteomes" id="UP000007067">
    <property type="component" value="Chromosome"/>
</dbReference>
<dbReference type="GO" id="GO:0042802">
    <property type="term" value="F:identical protein binding"/>
    <property type="evidence" value="ECO:0007669"/>
    <property type="project" value="TreeGrafter"/>
</dbReference>
<dbReference type="GO" id="GO:0030170">
    <property type="term" value="F:pyridoxal phosphate binding"/>
    <property type="evidence" value="ECO:0007669"/>
    <property type="project" value="UniProtKB-UniRule"/>
</dbReference>
<dbReference type="GO" id="GO:0043825">
    <property type="term" value="F:succinylornithine transaminase activity"/>
    <property type="evidence" value="ECO:0007669"/>
    <property type="project" value="UniProtKB-EC"/>
</dbReference>
<dbReference type="GO" id="GO:1901607">
    <property type="term" value="P:alpha-amino acid biosynthetic process"/>
    <property type="evidence" value="ECO:0007669"/>
    <property type="project" value="UniProtKB-ARBA"/>
</dbReference>
<dbReference type="GO" id="GO:0019544">
    <property type="term" value="P:arginine catabolic process to glutamate"/>
    <property type="evidence" value="ECO:0007669"/>
    <property type="project" value="UniProtKB-UniRule"/>
</dbReference>
<dbReference type="GO" id="GO:0019545">
    <property type="term" value="P:arginine catabolic process to succinate"/>
    <property type="evidence" value="ECO:0007669"/>
    <property type="project" value="UniProtKB-UniRule"/>
</dbReference>
<dbReference type="GO" id="GO:0006593">
    <property type="term" value="P:ornithine catabolic process"/>
    <property type="evidence" value="ECO:0007669"/>
    <property type="project" value="InterPro"/>
</dbReference>
<dbReference type="CDD" id="cd00610">
    <property type="entry name" value="OAT_like"/>
    <property type="match status" value="1"/>
</dbReference>
<dbReference type="FunFam" id="3.40.640.10:FF:000004">
    <property type="entry name" value="Acetylornithine aminotransferase"/>
    <property type="match status" value="1"/>
</dbReference>
<dbReference type="FunFam" id="3.90.1150.10:FF:000009">
    <property type="entry name" value="Succinylornithine transaminase"/>
    <property type="match status" value="1"/>
</dbReference>
<dbReference type="Gene3D" id="3.90.1150.10">
    <property type="entry name" value="Aspartate Aminotransferase, domain 1"/>
    <property type="match status" value="1"/>
</dbReference>
<dbReference type="Gene3D" id="3.40.640.10">
    <property type="entry name" value="Type I PLP-dependent aspartate aminotransferase-like (Major domain)"/>
    <property type="match status" value="1"/>
</dbReference>
<dbReference type="HAMAP" id="MF_01107">
    <property type="entry name" value="ArgD_aminotrans_3"/>
    <property type="match status" value="1"/>
</dbReference>
<dbReference type="HAMAP" id="MF_01173">
    <property type="entry name" value="AstC_aminotrans_3"/>
    <property type="match status" value="1"/>
</dbReference>
<dbReference type="InterPro" id="IPR017652">
    <property type="entry name" value="Ac/SucOrn_transaminase_bac"/>
</dbReference>
<dbReference type="InterPro" id="IPR004636">
    <property type="entry name" value="AcOrn/SuccOrn_fam"/>
</dbReference>
<dbReference type="InterPro" id="IPR005814">
    <property type="entry name" value="Aminotrans_3"/>
</dbReference>
<dbReference type="InterPro" id="IPR049704">
    <property type="entry name" value="Aminotrans_3_PPA_site"/>
</dbReference>
<dbReference type="InterPro" id="IPR050103">
    <property type="entry name" value="Class-III_PLP-dep_AT"/>
</dbReference>
<dbReference type="InterPro" id="IPR015424">
    <property type="entry name" value="PyrdxlP-dep_Trfase"/>
</dbReference>
<dbReference type="InterPro" id="IPR015421">
    <property type="entry name" value="PyrdxlP-dep_Trfase_major"/>
</dbReference>
<dbReference type="InterPro" id="IPR015422">
    <property type="entry name" value="PyrdxlP-dep_Trfase_small"/>
</dbReference>
<dbReference type="InterPro" id="IPR026330">
    <property type="entry name" value="SOAT"/>
</dbReference>
<dbReference type="NCBIfam" id="TIGR03246">
    <property type="entry name" value="arg_catab_astC"/>
    <property type="match status" value="1"/>
</dbReference>
<dbReference type="NCBIfam" id="TIGR00707">
    <property type="entry name" value="argD"/>
    <property type="match status" value="1"/>
</dbReference>
<dbReference type="NCBIfam" id="NF002325">
    <property type="entry name" value="PRK01278.1"/>
    <property type="match status" value="1"/>
</dbReference>
<dbReference type="NCBIfam" id="NF003468">
    <property type="entry name" value="PRK05093.1"/>
    <property type="match status" value="1"/>
</dbReference>
<dbReference type="NCBIfam" id="NF009047">
    <property type="entry name" value="PRK12381.1"/>
    <property type="match status" value="1"/>
</dbReference>
<dbReference type="PANTHER" id="PTHR11986">
    <property type="entry name" value="AMINOTRANSFERASE CLASS III"/>
    <property type="match status" value="1"/>
</dbReference>
<dbReference type="PANTHER" id="PTHR11986:SF113">
    <property type="entry name" value="SUCCINYLORNITHINE TRANSAMINASE"/>
    <property type="match status" value="1"/>
</dbReference>
<dbReference type="Pfam" id="PF00202">
    <property type="entry name" value="Aminotran_3"/>
    <property type="match status" value="1"/>
</dbReference>
<dbReference type="PIRSF" id="PIRSF000521">
    <property type="entry name" value="Transaminase_4ab_Lys_Orn"/>
    <property type="match status" value="1"/>
</dbReference>
<dbReference type="SUPFAM" id="SSF53383">
    <property type="entry name" value="PLP-dependent transferases"/>
    <property type="match status" value="1"/>
</dbReference>
<dbReference type="PROSITE" id="PS00600">
    <property type="entry name" value="AA_TRANSFER_CLASS_3"/>
    <property type="match status" value="1"/>
</dbReference>
<organism>
    <name type="scientific">Shigella boydii serotype 4 (strain Sb227)</name>
    <dbReference type="NCBI Taxonomy" id="300268"/>
    <lineage>
        <taxon>Bacteria</taxon>
        <taxon>Pseudomonadati</taxon>
        <taxon>Pseudomonadota</taxon>
        <taxon>Gammaproteobacteria</taxon>
        <taxon>Enterobacterales</taxon>
        <taxon>Enterobacteriaceae</taxon>
        <taxon>Shigella</taxon>
    </lineage>
</organism>
<keyword id="KW-0032">Aminotransferase</keyword>
<keyword id="KW-0056">Arginine metabolism</keyword>
<keyword id="KW-0663">Pyridoxal phosphate</keyword>
<keyword id="KW-0808">Transferase</keyword>
<name>ASTC_SHIBS</name>
<reference key="1">
    <citation type="journal article" date="2005" name="Nucleic Acids Res.">
        <title>Genome dynamics and diversity of Shigella species, the etiologic agents of bacillary dysentery.</title>
        <authorList>
            <person name="Yang F."/>
            <person name="Yang J."/>
            <person name="Zhang X."/>
            <person name="Chen L."/>
            <person name="Jiang Y."/>
            <person name="Yan Y."/>
            <person name="Tang X."/>
            <person name="Wang J."/>
            <person name="Xiong Z."/>
            <person name="Dong J."/>
            <person name="Xue Y."/>
            <person name="Zhu Y."/>
            <person name="Xu X."/>
            <person name="Sun L."/>
            <person name="Chen S."/>
            <person name="Nie H."/>
            <person name="Peng J."/>
            <person name="Xu J."/>
            <person name="Wang Y."/>
            <person name="Yuan Z."/>
            <person name="Wen Y."/>
            <person name="Yao Z."/>
            <person name="Shen Y."/>
            <person name="Qiang B."/>
            <person name="Hou Y."/>
            <person name="Yu J."/>
            <person name="Jin Q."/>
        </authorList>
    </citation>
    <scope>NUCLEOTIDE SEQUENCE [LARGE SCALE GENOMIC DNA]</scope>
    <source>
        <strain>Sb227</strain>
    </source>
</reference>
<accession>Q321P0</accession>
<evidence type="ECO:0000255" key="1">
    <source>
        <dbReference type="HAMAP-Rule" id="MF_01173"/>
    </source>
</evidence>
<sequence length="406" mass="43727">MSQPITRENFDEWMIPVYAPAPFIPVRGEGSRLWDQQGKEYIDFAGGIAVNALGHAHPELREALNEQASKFWHTGNGYTNEPVLRLAKKLIDATFADRVFFCNSGAEANEAALKLARKFAHDRYGSHKSGIMAFKNAFHGRTLFTVSAGGQPAYSQDFAPLPPDIRHAAYNDINSASALIDDATCAVIVEPIQGEGGVVPASNAFLQGLRELCDRHNALLIFDEVQTGVGRTGELYAYMHYGVTPDLLTTAKALGGDFPVGALLTTEECASVMTVGTHGTTYGGNPLASAVAGKVLELINTPEMLNGVKQRHDWFVERLNTINHRYGLFSEVRGLGLLIGCVLNADYAGQAKQISQEAAKAGVMVLIAGGNVVRFAPALNVSEEEVTTGLDRFAAACEHFVSRGSS</sequence>
<protein>
    <recommendedName>
        <fullName evidence="1">Succinylornithine transaminase</fullName>
        <shortName>SOAT</shortName>
        <ecNumber evidence="1">2.6.1.81</ecNumber>
    </recommendedName>
    <alternativeName>
        <fullName evidence="1">Succinylornithine aminotransferase</fullName>
    </alternativeName>
</protein>
<comment type="function">
    <text evidence="1">Catalyzes the transamination of N(2)-succinylornithine and alpha-ketoglutarate into N(2)-succinylglutamate semialdehyde and glutamate. Can also act as an acetylornithine aminotransferase.</text>
</comment>
<comment type="catalytic activity">
    <reaction evidence="1">
        <text>N(2)-succinyl-L-ornithine + 2-oxoglutarate = N-succinyl-L-glutamate 5-semialdehyde + L-glutamate</text>
        <dbReference type="Rhea" id="RHEA:16953"/>
        <dbReference type="ChEBI" id="CHEBI:16810"/>
        <dbReference type="ChEBI" id="CHEBI:29985"/>
        <dbReference type="ChEBI" id="CHEBI:58514"/>
        <dbReference type="ChEBI" id="CHEBI:58520"/>
        <dbReference type="EC" id="2.6.1.81"/>
    </reaction>
</comment>
<comment type="cofactor">
    <cofactor evidence="1">
        <name>pyridoxal 5'-phosphate</name>
        <dbReference type="ChEBI" id="CHEBI:597326"/>
    </cofactor>
</comment>
<comment type="pathway">
    <text evidence="1">Amino-acid degradation; L-arginine degradation via AST pathway; L-glutamate and succinate from L-arginine: step 3/5.</text>
</comment>
<comment type="similarity">
    <text evidence="1">Belongs to the class-III pyridoxal-phosphate-dependent aminotransferase family. AstC subfamily.</text>
</comment>
<gene>
    <name evidence="1" type="primary">astC</name>
    <name evidence="1" type="synonym">argM</name>
    <name type="ordered locus">SBO_1342</name>
</gene>
<proteinExistence type="inferred from homology"/>
<feature type="chain" id="PRO_0000262443" description="Succinylornithine transaminase">
    <location>
        <begin position="1"/>
        <end position="406"/>
    </location>
</feature>
<feature type="modified residue" description="N6-(pyridoxal phosphate)lysine" evidence="1">
    <location>
        <position position="252"/>
    </location>
</feature>